<dbReference type="EC" id="1.16.3.1" evidence="4"/>
<dbReference type="EC" id="1.16.3.4" evidence="3"/>
<dbReference type="EMBL" id="L25090">
    <property type="protein sequence ID" value="AAA64929.1"/>
    <property type="molecule type" value="Genomic_DNA"/>
</dbReference>
<dbReference type="EMBL" id="Z49703">
    <property type="protein sequence ID" value="CAA89768.1"/>
    <property type="molecule type" value="Genomic_DNA"/>
</dbReference>
<dbReference type="EMBL" id="BK006946">
    <property type="protein sequence ID" value="DAA09956.1"/>
    <property type="molecule type" value="Genomic_DNA"/>
</dbReference>
<dbReference type="PIR" id="A55428">
    <property type="entry name" value="A55428"/>
</dbReference>
<dbReference type="RefSeq" id="NP_013774.1">
    <property type="nucleotide sequence ID" value="NM_001182556.1"/>
</dbReference>
<dbReference type="PDB" id="1ZPU">
    <property type="method" value="X-ray"/>
    <property type="resolution" value="2.80 A"/>
    <property type="chains" value="A/B/C/D/E/F=22-555"/>
</dbReference>
<dbReference type="PDBsum" id="1ZPU"/>
<dbReference type="SMR" id="P38993"/>
<dbReference type="BioGRID" id="35233">
    <property type="interactions" value="135"/>
</dbReference>
<dbReference type="ComplexPortal" id="CPX-868">
    <property type="entry name" value="FET3-FTR1 high affinity iron permease complex"/>
</dbReference>
<dbReference type="DIP" id="DIP-5314N"/>
<dbReference type="FunCoup" id="P38993">
    <property type="interactions" value="929"/>
</dbReference>
<dbReference type="IntAct" id="P38993">
    <property type="interactions" value="13"/>
</dbReference>
<dbReference type="MINT" id="P38993"/>
<dbReference type="STRING" id="4932.YMR058W"/>
<dbReference type="TCDB" id="2.A.108.1.1">
    <property type="family name" value="the iron/lead transporter (ilt) family"/>
</dbReference>
<dbReference type="GlyCosmos" id="P38993">
    <property type="glycosylation" value="13 sites, No reported glycans"/>
</dbReference>
<dbReference type="GlyGen" id="P38993">
    <property type="glycosylation" value="13 sites"/>
</dbReference>
<dbReference type="iPTMnet" id="P38993"/>
<dbReference type="PaxDb" id="4932-YMR058W"/>
<dbReference type="PeptideAtlas" id="P38993"/>
<dbReference type="EnsemblFungi" id="YMR058W_mRNA">
    <property type="protein sequence ID" value="YMR058W"/>
    <property type="gene ID" value="YMR058W"/>
</dbReference>
<dbReference type="GeneID" id="855080"/>
<dbReference type="KEGG" id="sce:YMR058W"/>
<dbReference type="AGR" id="SGD:S000004662"/>
<dbReference type="SGD" id="S000004662">
    <property type="gene designation" value="FET3"/>
</dbReference>
<dbReference type="VEuPathDB" id="FungiDB:YMR058W"/>
<dbReference type="eggNOG" id="KOG1263">
    <property type="taxonomic scope" value="Eukaryota"/>
</dbReference>
<dbReference type="GeneTree" id="ENSGT00940000176768"/>
<dbReference type="HOGENOM" id="CLU_006504_7_3_1"/>
<dbReference type="InParanoid" id="P38993"/>
<dbReference type="OMA" id="ILHVGTH"/>
<dbReference type="OrthoDB" id="2121828at2759"/>
<dbReference type="BioCyc" id="YEAST:YMR058W-MONOMER"/>
<dbReference type="SABIO-RK" id="P38993"/>
<dbReference type="BioGRID-ORCS" id="855080">
    <property type="hits" value="0 hits in 10 CRISPR screens"/>
</dbReference>
<dbReference type="EvolutionaryTrace" id="P38993"/>
<dbReference type="PRO" id="PR:P38993"/>
<dbReference type="Proteomes" id="UP000002311">
    <property type="component" value="Chromosome XIII"/>
</dbReference>
<dbReference type="RNAct" id="P38993">
    <property type="molecule type" value="protein"/>
</dbReference>
<dbReference type="GO" id="GO:0005783">
    <property type="term" value="C:endoplasmic reticulum"/>
    <property type="evidence" value="ECO:0007005"/>
    <property type="project" value="SGD"/>
</dbReference>
<dbReference type="GO" id="GO:0000324">
    <property type="term" value="C:fungal-type vacuole"/>
    <property type="evidence" value="ECO:0007005"/>
    <property type="project" value="SGD"/>
</dbReference>
<dbReference type="GO" id="GO:0033573">
    <property type="term" value="C:high-affinity iron permease complex"/>
    <property type="evidence" value="ECO:0000314"/>
    <property type="project" value="SGD"/>
</dbReference>
<dbReference type="GO" id="GO:0005886">
    <property type="term" value="C:plasma membrane"/>
    <property type="evidence" value="ECO:0000314"/>
    <property type="project" value="SGD"/>
</dbReference>
<dbReference type="GO" id="GO:0005507">
    <property type="term" value="F:copper ion binding"/>
    <property type="evidence" value="ECO:0007669"/>
    <property type="project" value="InterPro"/>
</dbReference>
<dbReference type="GO" id="GO:0004322">
    <property type="term" value="F:ferroxidase activity"/>
    <property type="evidence" value="ECO:0000314"/>
    <property type="project" value="UniProtKB"/>
</dbReference>
<dbReference type="GO" id="GO:0016724">
    <property type="term" value="F:oxidoreductase activity, acting on metal ions, oxygen as acceptor"/>
    <property type="evidence" value="ECO:0000314"/>
    <property type="project" value="UniProtKB"/>
</dbReference>
<dbReference type="GO" id="GO:1901684">
    <property type="term" value="P:arsenate ion transmembrane transport"/>
    <property type="evidence" value="ECO:0000316"/>
    <property type="project" value="SGD"/>
</dbReference>
<dbReference type="GO" id="GO:0010106">
    <property type="term" value="P:cellular response to iron ion starvation"/>
    <property type="evidence" value="ECO:0000318"/>
    <property type="project" value="GO_Central"/>
</dbReference>
<dbReference type="GO" id="GO:0006878">
    <property type="term" value="P:intracellular copper ion homeostasis"/>
    <property type="evidence" value="ECO:0000314"/>
    <property type="project" value="UniProtKB"/>
</dbReference>
<dbReference type="GO" id="GO:0006879">
    <property type="term" value="P:intracellular iron ion homeostasis"/>
    <property type="evidence" value="ECO:0000314"/>
    <property type="project" value="UniProtKB"/>
</dbReference>
<dbReference type="GO" id="GO:0098706">
    <property type="term" value="P:iron ion import across cell outer membrane"/>
    <property type="evidence" value="ECO:0000314"/>
    <property type="project" value="ComplexPortal"/>
</dbReference>
<dbReference type="GO" id="GO:0034755">
    <property type="term" value="P:iron ion transmembrane transport"/>
    <property type="evidence" value="ECO:0000315"/>
    <property type="project" value="SGD"/>
</dbReference>
<dbReference type="GO" id="GO:0033215">
    <property type="term" value="P:reductive iron assimilation"/>
    <property type="evidence" value="ECO:0000315"/>
    <property type="project" value="SGD"/>
</dbReference>
<dbReference type="GO" id="GO:0046688">
    <property type="term" value="P:response to copper ion"/>
    <property type="evidence" value="ECO:0000315"/>
    <property type="project" value="SGD"/>
</dbReference>
<dbReference type="CDD" id="cd13851">
    <property type="entry name" value="CuRO_1_Fet3p"/>
    <property type="match status" value="1"/>
</dbReference>
<dbReference type="CDD" id="cd13877">
    <property type="entry name" value="CuRO_2_Fet3p_like"/>
    <property type="match status" value="1"/>
</dbReference>
<dbReference type="CDD" id="cd13899">
    <property type="entry name" value="CuRO_3_Fet3p"/>
    <property type="match status" value="1"/>
</dbReference>
<dbReference type="FunFam" id="2.60.40.420:FF:000022">
    <property type="entry name" value="FET5p Multicopper oxidase"/>
    <property type="match status" value="1"/>
</dbReference>
<dbReference type="FunFam" id="2.60.40.420:FF:000024">
    <property type="entry name" value="FET5p Multicopper oxidase"/>
    <property type="match status" value="1"/>
</dbReference>
<dbReference type="FunFam" id="2.60.40.420:FF:000025">
    <property type="entry name" value="FET5p Multicopper oxidase"/>
    <property type="match status" value="1"/>
</dbReference>
<dbReference type="Gene3D" id="2.60.40.420">
    <property type="entry name" value="Cupredoxins - blue copper proteins"/>
    <property type="match status" value="3"/>
</dbReference>
<dbReference type="InterPro" id="IPR011707">
    <property type="entry name" value="Cu-oxidase-like_N"/>
</dbReference>
<dbReference type="InterPro" id="IPR001117">
    <property type="entry name" value="Cu-oxidase_2nd"/>
</dbReference>
<dbReference type="InterPro" id="IPR011706">
    <property type="entry name" value="Cu-oxidase_C"/>
</dbReference>
<dbReference type="InterPro" id="IPR045087">
    <property type="entry name" value="Cu-oxidase_fam"/>
</dbReference>
<dbReference type="InterPro" id="IPR033138">
    <property type="entry name" value="Cu_oxidase_CS"/>
</dbReference>
<dbReference type="InterPro" id="IPR002355">
    <property type="entry name" value="Cu_oxidase_Cu_BS"/>
</dbReference>
<dbReference type="InterPro" id="IPR008972">
    <property type="entry name" value="Cupredoxin"/>
</dbReference>
<dbReference type="InterPro" id="IPR044130">
    <property type="entry name" value="CuRO_2_Fet3-like"/>
</dbReference>
<dbReference type="PANTHER" id="PTHR11709:SF361">
    <property type="entry name" value="IRON TRANSPORT MULTICOPPER OXIDASE FET3"/>
    <property type="match status" value="1"/>
</dbReference>
<dbReference type="PANTHER" id="PTHR11709">
    <property type="entry name" value="MULTI-COPPER OXIDASE"/>
    <property type="match status" value="1"/>
</dbReference>
<dbReference type="Pfam" id="PF00394">
    <property type="entry name" value="Cu-oxidase"/>
    <property type="match status" value="1"/>
</dbReference>
<dbReference type="Pfam" id="PF07731">
    <property type="entry name" value="Cu-oxidase_2"/>
    <property type="match status" value="1"/>
</dbReference>
<dbReference type="Pfam" id="PF07732">
    <property type="entry name" value="Cu-oxidase_3"/>
    <property type="match status" value="1"/>
</dbReference>
<dbReference type="SUPFAM" id="SSF49503">
    <property type="entry name" value="Cupredoxins"/>
    <property type="match status" value="3"/>
</dbReference>
<dbReference type="PROSITE" id="PS00079">
    <property type="entry name" value="MULTICOPPER_OXIDASE1"/>
    <property type="match status" value="2"/>
</dbReference>
<dbReference type="PROSITE" id="PS00080">
    <property type="entry name" value="MULTICOPPER_OXIDASE2"/>
    <property type="match status" value="1"/>
</dbReference>
<name>FET3_YEAST</name>
<sequence>MTNALLSIAVLLFSMLSLAQAETHTFNWTTGWDYRNVDGLKSRPVITCNGQFPWPDITVNKGDRVQIYLTNGMNNTNTSMHFHGLFQNGTASMDGVPFLTQCPIAPGSTMLYNFTVDYNVGTYWYHSHTDGQYEDGMKGLFIIKDDSFPYDYDEELSLSLSEWYHDLVTDLTKSFMSVYNPTGAEPIPQNLIVNNTMNLTWEVQPDTTYLLRIVNVGGFVSQYFWIEDHEMTVVEIDGITTEKNVTDMLYITVAQRYTVLVHTKNDTDKNFAIMQKFDDTMLDVIPSDLQLNATSYMVYNKTAALPTQNYVDSIDNFLDDFYLQPYEKEAIYGEPDHVITVDVVMDNLKNGVNYAFFNNITYTAPKVPTLMTVLSSGDQANNSEIYGSNTHTFILEKDEIVEIVLNNQDTGTHPFHLHGHAFQTIQRDRTYDDALGEVPHSFDPDNHPAFPEYPMRRDTLYVRPQSNFVIRFKADNPGVWFFHCHIEWHLLQGLGLVLVEDPFGIQDAHSQQLSENHLEVCQSCSVATEGNAAANTLDLTDLTGENVQHAFIPTGFTKKGIIAMTFSCFAGILGIITIAIYGMMDMEDATEKVIRDLHVDPEVLLNEVDENEERQVNEDRHSTEKHQFLTKAKRFF</sequence>
<protein>
    <recommendedName>
        <fullName>Iron transport multicopper oxidase FET3</fullName>
        <ecNumber evidence="4">1.16.3.1</ecNumber>
    </recommendedName>
    <alternativeName>
        <fullName evidence="10">Cuproxidase FET3</fullName>
        <ecNumber evidence="3">1.16.3.4</ecNumber>
    </alternativeName>
</protein>
<proteinExistence type="evidence at protein level"/>
<keyword id="KW-0002">3D-structure</keyword>
<keyword id="KW-1003">Cell membrane</keyword>
<keyword id="KW-0186">Copper</keyword>
<keyword id="KW-0325">Glycoprotein</keyword>
<keyword id="KW-0406">Ion transport</keyword>
<keyword id="KW-0408">Iron</keyword>
<keyword id="KW-0410">Iron transport</keyword>
<keyword id="KW-0472">Membrane</keyword>
<keyword id="KW-0479">Metal-binding</keyword>
<keyword id="KW-0560">Oxidoreductase</keyword>
<keyword id="KW-1185">Reference proteome</keyword>
<keyword id="KW-0677">Repeat</keyword>
<keyword id="KW-0732">Signal</keyword>
<keyword id="KW-0812">Transmembrane</keyword>
<keyword id="KW-1133">Transmembrane helix</keyword>
<keyword id="KW-0813">Transport</keyword>
<evidence type="ECO:0000255" key="1"/>
<evidence type="ECO:0000269" key="2">
    <source>
    </source>
</evidence>
<evidence type="ECO:0000269" key="3">
    <source>
    </source>
</evidence>
<evidence type="ECO:0000269" key="4">
    <source>
    </source>
</evidence>
<evidence type="ECO:0000269" key="5">
    <source>
    </source>
</evidence>
<evidence type="ECO:0000269" key="6">
    <source>
    </source>
</evidence>
<evidence type="ECO:0000269" key="7">
    <source>
    </source>
</evidence>
<evidence type="ECO:0000269" key="8">
    <source>
    </source>
</evidence>
<evidence type="ECO:0000305" key="9"/>
<evidence type="ECO:0000305" key="10">
    <source>
    </source>
</evidence>
<evidence type="ECO:0000305" key="11">
    <source>
    </source>
</evidence>
<evidence type="ECO:0007744" key="12">
    <source>
        <dbReference type="PDB" id="1ZPU"/>
    </source>
</evidence>
<evidence type="ECO:0007829" key="13">
    <source>
        <dbReference type="PDB" id="1ZPU"/>
    </source>
</evidence>
<organism>
    <name type="scientific">Saccharomyces cerevisiae (strain ATCC 204508 / S288c)</name>
    <name type="common">Baker's yeast</name>
    <dbReference type="NCBI Taxonomy" id="559292"/>
    <lineage>
        <taxon>Eukaryota</taxon>
        <taxon>Fungi</taxon>
        <taxon>Dikarya</taxon>
        <taxon>Ascomycota</taxon>
        <taxon>Saccharomycotina</taxon>
        <taxon>Saccharomycetes</taxon>
        <taxon>Saccharomycetales</taxon>
        <taxon>Saccharomycetaceae</taxon>
        <taxon>Saccharomyces</taxon>
    </lineage>
</organism>
<feature type="signal peptide" evidence="1">
    <location>
        <begin position="1"/>
        <end position="21"/>
    </location>
</feature>
<feature type="chain" id="PRO_0000002959" description="Iron transport multicopper oxidase FET3">
    <location>
        <begin position="22"/>
        <end position="636"/>
    </location>
</feature>
<feature type="topological domain" description="Extracellular" evidence="11">
    <location>
        <begin position="22"/>
        <end position="559"/>
    </location>
</feature>
<feature type="transmembrane region" description="Helical" evidence="1">
    <location>
        <begin position="560"/>
        <end position="584"/>
    </location>
</feature>
<feature type="topological domain" description="Cytoplasmic" evidence="11">
    <location>
        <begin position="585"/>
        <end position="636"/>
    </location>
</feature>
<feature type="domain" description="Plastocyanin-like 1" evidence="1">
    <location>
        <begin position="32"/>
        <end position="146"/>
    </location>
</feature>
<feature type="domain" description="Plastocyanin-like 2" evidence="1">
    <location>
        <begin position="157"/>
        <end position="301"/>
    </location>
</feature>
<feature type="domain" description="Plastocyanin-like 3" evidence="1">
    <location>
        <begin position="362"/>
        <end position="502"/>
    </location>
</feature>
<feature type="binding site" description="type 2 copper site" evidence="4 12">
    <location>
        <position position="81"/>
    </location>
    <ligand>
        <name>Cu cation</name>
        <dbReference type="ChEBI" id="CHEBI:23378"/>
        <label>1</label>
    </ligand>
</feature>
<feature type="binding site" description="type 3 copper site" evidence="4 12">
    <location>
        <position position="83"/>
    </location>
    <ligand>
        <name>Cu cation</name>
        <dbReference type="ChEBI" id="CHEBI:23378"/>
        <label>2</label>
    </ligand>
</feature>
<feature type="binding site" description="type 3 copper site" evidence="4 12">
    <location>
        <position position="126"/>
    </location>
    <ligand>
        <name>Cu cation</name>
        <dbReference type="ChEBI" id="CHEBI:23378"/>
        <label>2</label>
    </ligand>
</feature>
<feature type="binding site" description="type 3 copper site" evidence="4 12">
    <location>
        <position position="128"/>
    </location>
    <ligand>
        <name>Cu cation</name>
        <dbReference type="ChEBI" id="CHEBI:23378"/>
        <label>3</label>
    </ligand>
</feature>
<feature type="binding site" description="type 1 copper site" evidence="4 12">
    <location>
        <position position="413"/>
    </location>
    <ligand>
        <name>Cu cation</name>
        <dbReference type="ChEBI" id="CHEBI:23378"/>
        <label>4</label>
    </ligand>
</feature>
<feature type="binding site" description="type 2 copper site" evidence="4 12">
    <location>
        <position position="416"/>
    </location>
    <ligand>
        <name>Cu cation</name>
        <dbReference type="ChEBI" id="CHEBI:23378"/>
        <label>1</label>
    </ligand>
</feature>
<feature type="binding site" description="type 3 copper site" evidence="4 12">
    <location>
        <position position="418"/>
    </location>
    <ligand>
        <name>Cu cation</name>
        <dbReference type="ChEBI" id="CHEBI:23378"/>
        <label>3</label>
    </ligand>
</feature>
<feature type="binding site" description="type 3 copper site" evidence="4 12">
    <location>
        <position position="483"/>
    </location>
    <ligand>
        <name>Cu cation</name>
        <dbReference type="ChEBI" id="CHEBI:23378"/>
        <label>3</label>
    </ligand>
</feature>
<feature type="binding site" description="type 1 copper site" evidence="4 12">
    <location>
        <position position="484"/>
    </location>
    <ligand>
        <name>Cu cation</name>
        <dbReference type="ChEBI" id="CHEBI:23378"/>
        <label>4</label>
    </ligand>
</feature>
<feature type="binding site" description="type 3 copper site" evidence="4 12">
    <location>
        <position position="485"/>
    </location>
    <ligand>
        <name>Cu cation</name>
        <dbReference type="ChEBI" id="CHEBI:23378"/>
        <label>2</label>
    </ligand>
</feature>
<feature type="binding site" description="type 1 copper site" evidence="4 12">
    <location>
        <position position="489"/>
    </location>
    <ligand>
        <name>Cu cation</name>
        <dbReference type="ChEBI" id="CHEBI:23378"/>
        <label>4</label>
    </ligand>
</feature>
<feature type="glycosylation site" description="N-linked (GlcNAc...) asparagine" evidence="4 12">
    <location>
        <position position="27"/>
    </location>
</feature>
<feature type="glycosylation site" description="N-linked (GlcNAc...) asparagine" evidence="1">
    <location>
        <position position="74"/>
    </location>
</feature>
<feature type="glycosylation site" description="N-linked (GlcNAc...) asparagine" evidence="4 12">
    <location>
        <position position="77"/>
    </location>
</feature>
<feature type="glycosylation site" description="N-linked (GlcNAc...) asparagine" evidence="4 12">
    <location>
        <position position="88"/>
    </location>
</feature>
<feature type="glycosylation site" description="N-linked (GlcNAc...) asparagine" evidence="4 12">
    <location>
        <position position="113"/>
    </location>
</feature>
<feature type="glycosylation site" description="N-linked (GlcNAc...) asparagine" evidence="4 12">
    <location>
        <position position="194"/>
    </location>
</feature>
<feature type="glycosylation site" description="N-linked (GlcNAc...) asparagine" evidence="4 12">
    <location>
        <position position="198"/>
    </location>
</feature>
<feature type="glycosylation site" description="N-linked (GlcNAc...) asparagine" evidence="4 12">
    <location>
        <position position="244"/>
    </location>
</feature>
<feature type="glycosylation site" description="N-linked (GlcNAc...) asparagine" evidence="1">
    <location>
        <position position="265"/>
    </location>
</feature>
<feature type="glycosylation site" description="N-linked (GlcNAc...) asparagine" evidence="4 12">
    <location>
        <position position="292"/>
    </location>
</feature>
<feature type="glycosylation site" description="N-linked (GlcNAc...) asparagine" evidence="4 12">
    <location>
        <position position="300"/>
    </location>
</feature>
<feature type="glycosylation site" description="N-linked (GlcNAc...) asparagine" evidence="4 12">
    <location>
        <position position="359"/>
    </location>
</feature>
<feature type="glycosylation site" description="N-linked (GlcNAc...) asparagine" evidence="4 12">
    <location>
        <position position="381"/>
    </location>
</feature>
<feature type="mutagenesis site" description="Loss of ferroxidase and cuproxidase activities." evidence="3">
    <original>C</original>
    <variation>S</variation>
    <location>
        <position position="484"/>
    </location>
</feature>
<feature type="strand" evidence="13">
    <location>
        <begin position="23"/>
        <end position="35"/>
    </location>
</feature>
<feature type="strand" evidence="13">
    <location>
        <begin position="37"/>
        <end position="40"/>
    </location>
</feature>
<feature type="strand" evidence="13">
    <location>
        <begin position="43"/>
        <end position="48"/>
    </location>
</feature>
<feature type="strand" evidence="13">
    <location>
        <begin position="51"/>
        <end position="53"/>
    </location>
</feature>
<feature type="strand" evidence="13">
    <location>
        <begin position="57"/>
        <end position="60"/>
    </location>
</feature>
<feature type="strand" evidence="13">
    <location>
        <begin position="64"/>
        <end position="70"/>
    </location>
</feature>
<feature type="strand" evidence="13">
    <location>
        <begin position="81"/>
        <end position="83"/>
    </location>
</feature>
<feature type="helix" evidence="13">
    <location>
        <begin position="91"/>
        <end position="93"/>
    </location>
</feature>
<feature type="turn" evidence="13">
    <location>
        <begin position="97"/>
        <end position="99"/>
    </location>
</feature>
<feature type="strand" evidence="13">
    <location>
        <begin position="109"/>
        <end position="115"/>
    </location>
</feature>
<feature type="strand" evidence="13">
    <location>
        <begin position="121"/>
        <end position="126"/>
    </location>
</feature>
<feature type="strand" evidence="13">
    <location>
        <begin position="129"/>
        <end position="131"/>
    </location>
</feature>
<feature type="helix" evidence="13">
    <location>
        <begin position="132"/>
        <end position="135"/>
    </location>
</feature>
<feature type="strand" evidence="13">
    <location>
        <begin position="138"/>
        <end position="144"/>
    </location>
</feature>
<feature type="strand" evidence="13">
    <location>
        <begin position="153"/>
        <end position="163"/>
    </location>
</feature>
<feature type="helix" evidence="13">
    <location>
        <begin position="168"/>
        <end position="175"/>
    </location>
</feature>
<feature type="strand" evidence="13">
    <location>
        <begin position="189"/>
        <end position="193"/>
    </location>
</feature>
<feature type="strand" evidence="13">
    <location>
        <begin position="196"/>
        <end position="198"/>
    </location>
</feature>
<feature type="strand" evidence="13">
    <location>
        <begin position="200"/>
        <end position="202"/>
    </location>
</feature>
<feature type="strand" evidence="13">
    <location>
        <begin position="208"/>
        <end position="215"/>
    </location>
</feature>
<feature type="strand" evidence="13">
    <location>
        <begin position="222"/>
        <end position="226"/>
    </location>
</feature>
<feature type="strand" evidence="13">
    <location>
        <begin position="231"/>
        <end position="236"/>
    </location>
</feature>
<feature type="strand" evidence="13">
    <location>
        <begin position="239"/>
        <end position="247"/>
    </location>
</feature>
<feature type="strand" evidence="13">
    <location>
        <begin position="249"/>
        <end position="251"/>
    </location>
</feature>
<feature type="strand" evidence="13">
    <location>
        <begin position="256"/>
        <end position="262"/>
    </location>
</feature>
<feature type="strand" evidence="13">
    <location>
        <begin position="271"/>
        <end position="277"/>
    </location>
</feature>
<feature type="helix" evidence="13">
    <location>
        <begin position="279"/>
        <end position="281"/>
    </location>
</feature>
<feature type="strand" evidence="13">
    <location>
        <begin position="282"/>
        <end position="284"/>
    </location>
</feature>
<feature type="strand" evidence="13">
    <location>
        <begin position="292"/>
        <end position="299"/>
    </location>
</feature>
<feature type="helix" evidence="13">
    <location>
        <begin position="320"/>
        <end position="322"/>
    </location>
</feature>
<feature type="strand" evidence="13">
    <location>
        <begin position="325"/>
        <end position="327"/>
    </location>
</feature>
<feature type="strand" evidence="13">
    <location>
        <begin position="336"/>
        <end position="347"/>
    </location>
</feature>
<feature type="strand" evidence="13">
    <location>
        <begin position="353"/>
        <end position="357"/>
    </location>
</feature>
<feature type="helix" evidence="13">
    <location>
        <begin position="369"/>
        <end position="373"/>
    </location>
</feature>
<feature type="helix" evidence="13">
    <location>
        <begin position="377"/>
        <end position="379"/>
    </location>
</feature>
<feature type="helix" evidence="13">
    <location>
        <begin position="383"/>
        <end position="386"/>
    </location>
</feature>
<feature type="strand" evidence="13">
    <location>
        <begin position="388"/>
        <end position="390"/>
    </location>
</feature>
<feature type="strand" evidence="13">
    <location>
        <begin position="392"/>
        <end position="395"/>
    </location>
</feature>
<feature type="strand" evidence="13">
    <location>
        <begin position="400"/>
        <end position="407"/>
    </location>
</feature>
<feature type="strand" evidence="13">
    <location>
        <begin position="409"/>
        <end position="411"/>
    </location>
</feature>
<feature type="strand" evidence="13">
    <location>
        <begin position="413"/>
        <end position="417"/>
    </location>
</feature>
<feature type="strand" evidence="13">
    <location>
        <begin position="422"/>
        <end position="427"/>
    </location>
</feature>
<feature type="helix" evidence="13">
    <location>
        <begin position="433"/>
        <end position="435"/>
    </location>
</feature>
<feature type="strand" evidence="13">
    <location>
        <begin position="455"/>
        <end position="462"/>
    </location>
</feature>
<feature type="strand" evidence="13">
    <location>
        <begin position="467"/>
        <end position="473"/>
    </location>
</feature>
<feature type="strand" evidence="13">
    <location>
        <begin position="478"/>
        <end position="484"/>
    </location>
</feature>
<feature type="helix" evidence="13">
    <location>
        <begin position="487"/>
        <end position="491"/>
    </location>
</feature>
<feature type="strand" evidence="13">
    <location>
        <begin position="495"/>
        <end position="500"/>
    </location>
</feature>
<feature type="helix" evidence="13">
    <location>
        <begin position="502"/>
        <end position="507"/>
    </location>
</feature>
<feature type="helix" evidence="13">
    <location>
        <begin position="509"/>
        <end position="511"/>
    </location>
</feature>
<feature type="helix" evidence="13">
    <location>
        <begin position="515"/>
        <end position="523"/>
    </location>
</feature>
<feature type="strand" evidence="13">
    <location>
        <begin position="529"/>
        <end position="533"/>
    </location>
</feature>
<feature type="strand" evidence="13">
    <location>
        <begin position="535"/>
        <end position="537"/>
    </location>
</feature>
<reference key="1">
    <citation type="journal article" date="1994" name="Cell">
        <title>The FET3 gene of S. cerevisiae encodes a multicopper oxidase required for ferrous iron uptake.</title>
        <authorList>
            <person name="Askwith C."/>
            <person name="Eide D."/>
            <person name="van Ho A."/>
            <person name="Bernard P.S."/>
            <person name="Li L."/>
            <person name="Davis-Kaplan S."/>
            <person name="Sipe D.M."/>
            <person name="Kaplan J."/>
        </authorList>
    </citation>
    <scope>NUCLEOTIDE SEQUENCE [GENOMIC DNA]</scope>
    <scope>FUNCTION</scope>
    <scope>INDUCTION</scope>
    <source>
        <strain>ATCC 200060 / W303</strain>
    </source>
</reference>
<reference key="2">
    <citation type="journal article" date="1997" name="Nature">
        <title>The nucleotide sequence of Saccharomyces cerevisiae chromosome XIII.</title>
        <authorList>
            <person name="Bowman S."/>
            <person name="Churcher C.M."/>
            <person name="Badcock K."/>
            <person name="Brown D."/>
            <person name="Chillingworth T."/>
            <person name="Connor R."/>
            <person name="Dedman K."/>
            <person name="Devlin K."/>
            <person name="Gentles S."/>
            <person name="Hamlin N."/>
            <person name="Hunt S."/>
            <person name="Jagels K."/>
            <person name="Lye G."/>
            <person name="Moule S."/>
            <person name="Odell C."/>
            <person name="Pearson D."/>
            <person name="Rajandream M.A."/>
            <person name="Rice P."/>
            <person name="Skelton J."/>
            <person name="Walsh S.V."/>
            <person name="Whitehead S."/>
            <person name="Barrell B.G."/>
        </authorList>
    </citation>
    <scope>NUCLEOTIDE SEQUENCE [LARGE SCALE GENOMIC DNA]</scope>
    <source>
        <strain>ATCC 204508 / S288c</strain>
    </source>
</reference>
<reference key="3">
    <citation type="journal article" date="2014" name="G3 (Bethesda)">
        <title>The reference genome sequence of Saccharomyces cerevisiae: Then and now.</title>
        <authorList>
            <person name="Engel S.R."/>
            <person name="Dietrich F.S."/>
            <person name="Fisk D.G."/>
            <person name="Binkley G."/>
            <person name="Balakrishnan R."/>
            <person name="Costanzo M.C."/>
            <person name="Dwight S.S."/>
            <person name="Hitz B.C."/>
            <person name="Karra K."/>
            <person name="Nash R.S."/>
            <person name="Weng S."/>
            <person name="Wong E.D."/>
            <person name="Lloyd P."/>
            <person name="Skrzypek M.S."/>
            <person name="Miyasato S.R."/>
            <person name="Simison M."/>
            <person name="Cherry J.M."/>
        </authorList>
    </citation>
    <scope>GENOME REANNOTATION</scope>
    <source>
        <strain>ATCC 204508 / S288c</strain>
    </source>
</reference>
<reference key="4">
    <citation type="journal article" date="1995" name="J. Biol. Chem.">
        <title>The FET3 gene product required for high affinity iron transport in yeast is a cell surface ferroxidase.</title>
        <authorList>
            <person name="de Silva D.M."/>
            <person name="Askwith C.C."/>
            <person name="Eide D."/>
            <person name="Kaplan J."/>
        </authorList>
    </citation>
    <scope>FUNCTION</scope>
    <scope>SUBCELLULAR LOCATION</scope>
</reference>
<reference key="5">
    <citation type="journal article" date="1997" name="J. Biol. Chem.">
        <title>Purification and characterization of Fet3 protein, a yeast homologue of ceruloplasmin.</title>
        <authorList>
            <person name="de Silva D."/>
            <person name="Davis-Kaplan S."/>
            <person name="Fergestad J."/>
            <person name="Kaplan J."/>
        </authorList>
    </citation>
    <scope>SUBCELLULAR LOCATION</scope>
</reference>
<reference key="6">
    <citation type="journal article" date="1998" name="J. Am. Chem. Soc.">
        <title>Spectroscopic characterization of the Cu(II) sites in the Fet3 protein, the multinuclear copper oxidase from yeast required for high affinity iron uptake.</title>
        <authorList>
            <person name="Kosman D.J."/>
            <person name="Hassett R."/>
            <person name="Yuan D.S."/>
            <person name="McCracken J."/>
        </authorList>
    </citation>
    <scope>EPR SPECTROSCOPY</scope>
</reference>
<reference key="7">
    <citation type="journal article" date="1998" name="J. Biol. Chem.">
        <title>Spectral and kinetic properties of the Fet3 protein from Saccharomyces cerevisiae, a multinuclear copper ferroxidase enzyme.</title>
        <authorList>
            <person name="Hassett R."/>
            <person name="Yuan D.S."/>
            <person name="Kosman D.J."/>
        </authorList>
    </citation>
    <scope>ENZYME KINETICS</scope>
    <scope>ABSORPTION SPECTROSCOPY</scope>
    <scope>EPR SPECTROSCOPY</scope>
</reference>
<reference key="8">
    <citation type="journal article" date="2001" name="J. Am. Chem. Soc.">
        <title>Spectroscopy and reactivity of the type 1 copper site in Fet3p from Saccharomyces cerevisiae: correlation of structure with reactivity in the multicopper oxidases.</title>
        <authorList>
            <person name="Machonkin T.E."/>
            <person name="Quintanar L."/>
            <person name="Palmer A.E."/>
            <person name="Hassett R."/>
            <person name="Severance S."/>
            <person name="Kosman D.J."/>
            <person name="Solomon E.I."/>
        </authorList>
    </citation>
    <scope>ABSORPTION SPECTROSCOPY</scope>
    <scope>CIRCULAR DICHROISM ANALYSIS</scope>
    <scope>MAGNETIC CIRCULAR DICHROISM</scope>
    <scope>EPR SPECTROSCOPY</scope>
    <scope>RESONANCE RAMAN SPECTROSCOPY</scope>
</reference>
<reference key="9">
    <citation type="journal article" date="2002" name="Biochemistry">
        <title>Spectroscopic characterization and O(2) reactivity of the trinuclear Cu cluster of mutants of the multicopper oxidase Fet3p.</title>
        <authorList>
            <person name="Palmer A.E."/>
            <person name="Quintanar L."/>
            <person name="Severance S."/>
            <person name="Wang T.P."/>
            <person name="Kosman D.J."/>
            <person name="Solomon E.I."/>
        </authorList>
    </citation>
    <scope>CIRCULAR DICHROISM ANALYSIS</scope>
    <scope>MAGNETIC CIRCULAR DICHROISM</scope>
    <scope>EPR SPECTROSCOPY OF MUTANTS</scope>
</reference>
<reference key="10">
    <citation type="journal article" date="2000" name="Biochemistry">
        <title>Spectroscopic analysis of the trinuclear cluster in the Fet3 protein from yeast, a multinuclear copper oxidase.</title>
        <authorList>
            <person name="Blackburn N.J."/>
            <person name="Ralle M."/>
            <person name="Hassett R."/>
            <person name="Kosman D.J."/>
        </authorList>
    </citation>
    <scope>MUTAGENESIS OF COPPER LIGANDS</scope>
    <scope>ABSORPTION SPECTROSCOPY</scope>
    <scope>EPR SPECTROSCOPY</scope>
</reference>
<reference key="11">
    <citation type="journal article" date="2003" name="Nature">
        <title>Global analysis of protein expression in yeast.</title>
        <authorList>
            <person name="Ghaemmaghami S."/>
            <person name="Huh W.-K."/>
            <person name="Bower K."/>
            <person name="Howson R.W."/>
            <person name="Belle A."/>
            <person name="Dephoure N."/>
            <person name="O'Shea E.K."/>
            <person name="Weissman J.S."/>
        </authorList>
    </citation>
    <scope>LEVEL OF PROTEIN EXPRESSION [LARGE SCALE ANALYSIS]</scope>
</reference>
<reference key="12">
    <citation type="journal article" date="2003" name="FEBS Lett.">
        <title>Cuprous oxidase activity of yeast Fet3p and human ceruloplasmin: implication for function.</title>
        <authorList>
            <person name="Stoj C."/>
            <person name="Kosman D.J."/>
        </authorList>
    </citation>
    <scope>FUNCTION</scope>
    <scope>CATALYTIC ACTIVITY</scope>
    <scope>BIOPHYSICOCHEMICAL PROPERTIES</scope>
    <scope>MUTAGENESIS OF CYS-484</scope>
</reference>
<reference key="13">
    <citation type="journal article" date="2006" name="J. Biol. Chem.">
        <title>Assembly, activation, and trafficking of the Fet3p.Ftr1p high affinity iron permease complex in Saccharomyces cerevisiae.</title>
        <authorList>
            <person name="Singh A."/>
            <person name="Severance S."/>
            <person name="Kaur N."/>
            <person name="Wiltsie W."/>
            <person name="Kosman D.J."/>
        </authorList>
    </citation>
    <scope>SUBCELLULAR LOCATION</scope>
    <scope>TOPOLOGY</scope>
</reference>
<reference key="14">
    <citation type="journal article" date="2007" name="Proc. Natl. Acad. Sci. U.S.A.">
        <title>Analysis of phosphorylation sites on proteins from Saccharomyces cerevisiae by electron transfer dissociation (ETD) mass spectrometry.</title>
        <authorList>
            <person name="Chi A."/>
            <person name="Huttenhower C."/>
            <person name="Geer L.Y."/>
            <person name="Coon J.J."/>
            <person name="Syka J.E.P."/>
            <person name="Bai D.L."/>
            <person name="Shabanowitz J."/>
            <person name="Burke D.J."/>
            <person name="Troyanskaya O.G."/>
            <person name="Hunt D.F."/>
        </authorList>
    </citation>
    <scope>IDENTIFICATION BY MASS SPECTROMETRY [LARGE SCALE ANALYSIS]</scope>
</reference>
<reference key="15">
    <citation type="journal article" date="2009" name="Science">
        <title>Global analysis of Cdk1 substrate phosphorylation sites provides insights into evolution.</title>
        <authorList>
            <person name="Holt L.J."/>
            <person name="Tuch B.B."/>
            <person name="Villen J."/>
            <person name="Johnson A.D."/>
            <person name="Gygi S.P."/>
            <person name="Morgan D.O."/>
        </authorList>
    </citation>
    <scope>IDENTIFICATION BY MASS SPECTROMETRY [LARGE SCALE ANALYSIS]</scope>
</reference>
<reference evidence="12" key="16">
    <citation type="journal article" date="2005" name="Proc. Natl. Acad. Sci. U.S.A.">
        <title>The copper-iron connection in biology: structure of the metallo-oxidase Fet3p.</title>
        <authorList>
            <person name="Taylor A.B."/>
            <person name="Stoj C.S."/>
            <person name="Ziegler L."/>
            <person name="Kosman D.J."/>
            <person name="Hart P.J."/>
        </authorList>
    </citation>
    <scope>X-RAY CRYSTALLOGRAPHY (2.8 ANGSTROMS) OF 22-555 IN COMPLEX WITH COPPER</scope>
    <scope>CATALYTIC ACTIVITY</scope>
    <scope>GLYCOSYLATION AT ASN-27; ASN-77; ASN-88; ASN-113; ASN-194; ASN-198; ASN-244; ASN-292; ASN-300; ASN-359 AND ASN-381</scope>
</reference>
<comment type="function">
    <text evidence="3 6 7">Iron transport multicopper ferroxidase required for Fe(2+) ion high affinity uptake. Required to oxidize Fe(2+) to Fe(3+), which is then transported into the cell via the ferric iron permease FTR1. Essential component of copper-dependent iron transport. Also has cuprous oxidase activity (PubMed:14623105).</text>
</comment>
<comment type="catalytic activity">
    <molecule>Iron transport multicopper oxidase FET3</molecule>
    <reaction evidence="3 4">
        <text>4 Fe(2+) + O2 + 4 H(+) = 4 Fe(3+) + 2 H2O</text>
        <dbReference type="Rhea" id="RHEA:11148"/>
        <dbReference type="ChEBI" id="CHEBI:15377"/>
        <dbReference type="ChEBI" id="CHEBI:15378"/>
        <dbReference type="ChEBI" id="CHEBI:15379"/>
        <dbReference type="ChEBI" id="CHEBI:29033"/>
        <dbReference type="ChEBI" id="CHEBI:29034"/>
        <dbReference type="EC" id="1.16.3.1"/>
    </reaction>
    <physiologicalReaction direction="left-to-right" evidence="3 4">
        <dbReference type="Rhea" id="RHEA:11149"/>
    </physiologicalReaction>
</comment>
<comment type="catalytic activity">
    <reaction evidence="3">
        <text>4 Cu(+) + O2 + 4 H(+) = 4 Cu(2+) + 2 H2O</text>
        <dbReference type="Rhea" id="RHEA:30083"/>
        <dbReference type="ChEBI" id="CHEBI:15377"/>
        <dbReference type="ChEBI" id="CHEBI:15378"/>
        <dbReference type="ChEBI" id="CHEBI:15379"/>
        <dbReference type="ChEBI" id="CHEBI:29036"/>
        <dbReference type="ChEBI" id="CHEBI:49552"/>
        <dbReference type="EC" id="1.16.3.4"/>
    </reaction>
    <physiologicalReaction direction="left-to-right" evidence="3">
        <dbReference type="Rhea" id="RHEA:30084"/>
    </physiologicalReaction>
</comment>
<comment type="cofactor">
    <cofactor evidence="4">
        <name>Cu cation</name>
        <dbReference type="ChEBI" id="CHEBI:23378"/>
    </cofactor>
    <text evidence="4">Binds 4 Cu cations per monomer.</text>
</comment>
<comment type="biophysicochemical properties">
    <kinetics>
        <KM evidence="3">37.9 uM for Cu(+)</KM>
        <KM evidence="3">5.4 uM for Fe(2+)</KM>
        <text evidence="3">kcat is 79.2 min(-1) and 63.9 min(-1) with Cu(+) and Fe(2+) as substrates, respectively.</text>
    </kinetics>
</comment>
<comment type="interaction">
    <interactant intactId="EBI-6876">
        <id>P38993</id>
    </interactant>
    <interactant intactId="EBI-7138">
        <id>P40088</id>
        <label>FTR1</label>
    </interactant>
    <organismsDiffer>false</organismsDiffer>
    <experiments>6</experiments>
</comment>
<comment type="subcellular location">
    <subcellularLocation>
        <location evidence="5 6 8">Cell membrane</location>
        <topology>Single-pass type I membrane protein</topology>
        <orientation evidence="5 6">Extracellular side</orientation>
    </subcellularLocation>
</comment>
<comment type="induction">
    <text evidence="7">By iron deprivation. Repressed by iron excess.</text>
</comment>
<comment type="miscellaneous">
    <text evidence="2">Present with 1050 molecules/cell in log phase SD medium.</text>
</comment>
<comment type="similarity">
    <text evidence="9">Belongs to the multicopper oxidase family.</text>
</comment>
<accession>P38993</accession>
<accession>D6VZN2</accession>
<gene>
    <name type="primary">FET3</name>
    <name type="ordered locus">YMR058W</name>
    <name type="ORF">YM9796.11</name>
</gene>